<proteinExistence type="inferred from homology"/>
<reference key="1">
    <citation type="journal article" date="2002" name="Mol. Microbiol.">
        <title>Genome sequence of Streptococcus agalactiae, a pathogen causing invasive neonatal disease.</title>
        <authorList>
            <person name="Glaser P."/>
            <person name="Rusniok C."/>
            <person name="Buchrieser C."/>
            <person name="Chevalier F."/>
            <person name="Frangeul L."/>
            <person name="Msadek T."/>
            <person name="Zouine M."/>
            <person name="Couve E."/>
            <person name="Lalioui L."/>
            <person name="Poyart C."/>
            <person name="Trieu-Cuot P."/>
            <person name="Kunst F."/>
        </authorList>
    </citation>
    <scope>NUCLEOTIDE SEQUENCE [LARGE SCALE GENOMIC DNA]</scope>
    <source>
        <strain>NEM316</strain>
    </source>
</reference>
<sequence>MSSEEKYIMAIDQGTTSSRAIIFNKKGEKIASSQKEFPQIFPQAGWVEHNANQIWNSVQSVIAGAFIESSIKPGQIEAIGITNQRETTVVWDKKTGLPIYNAIVWQSRQTAPIADQLKQEGHTNMIHEKTGLVIDAYFSATKVRWILDHVPGAQERAEKGELLFGTIDTWLVWKLTDGLVHVTDYSNAARTMLYNIKELKWDDEILELLNIPKAMLPEVKSNSEVYGKTTPFHFYGGEVPISGMAGDQQAALFGQLAFEPGMVKNTYGTGSFIIMNTGEEMQLSQNNLLTTIGYGINGKVHYALEGSIFIAGSAIQWLRDGLRMIETSSESEGLAQSSTSDDEVYVVPAFTGLGAPYWDSNARGSVFGLTRGTSKEDFVKATLQSIAYQVRDVIDTMQVDSGIDIQQLRVDGGAAMNNLLMQFQADILGIDIARAKNLETTALGAAFLAGLSVGYWESMDELKELNATGQLFQATMNESRKEKLYKGWRKAVKATQVFAQED</sequence>
<comment type="function">
    <text evidence="1">Key enzyme in the regulation of glycerol uptake and metabolism. Catalyzes the phosphorylation of glycerol to yield sn-glycerol 3-phosphate.</text>
</comment>
<comment type="catalytic activity">
    <reaction evidence="1">
        <text>glycerol + ATP = sn-glycerol 3-phosphate + ADP + H(+)</text>
        <dbReference type="Rhea" id="RHEA:21644"/>
        <dbReference type="ChEBI" id="CHEBI:15378"/>
        <dbReference type="ChEBI" id="CHEBI:17754"/>
        <dbReference type="ChEBI" id="CHEBI:30616"/>
        <dbReference type="ChEBI" id="CHEBI:57597"/>
        <dbReference type="ChEBI" id="CHEBI:456216"/>
        <dbReference type="EC" id="2.7.1.30"/>
    </reaction>
</comment>
<comment type="activity regulation">
    <text evidence="1">Activated by phosphorylation and inhibited by fructose 1,6-bisphosphate (FBP).</text>
</comment>
<comment type="pathway">
    <text evidence="1">Polyol metabolism; glycerol degradation via glycerol kinase pathway; sn-glycerol 3-phosphate from glycerol: step 1/1.</text>
</comment>
<comment type="subunit">
    <text evidence="1">Homotetramer and homodimer (in equilibrium).</text>
</comment>
<comment type="PTM">
    <text evidence="1">The phosphoenolpyruvate-dependent sugar phosphotransferase system (PTS), including enzyme I, and histidine-containing protein (HPr) are required for the phosphorylation, which leads to the activation of the enzyme.</text>
</comment>
<comment type="similarity">
    <text evidence="1">Belongs to the FGGY kinase family.</text>
</comment>
<gene>
    <name evidence="1" type="primary">glpK</name>
    <name type="ordered locus">gbs0263</name>
</gene>
<protein>
    <recommendedName>
        <fullName evidence="1">Glycerol kinase</fullName>
        <ecNumber evidence="1">2.7.1.30</ecNumber>
    </recommendedName>
    <alternativeName>
        <fullName evidence="1">ATP:glycerol 3-phosphotransferase</fullName>
    </alternativeName>
    <alternativeName>
        <fullName evidence="1">Glycerokinase</fullName>
        <shortName evidence="1">GK</shortName>
    </alternativeName>
</protein>
<dbReference type="EC" id="2.7.1.30" evidence="1"/>
<dbReference type="EMBL" id="AL766844">
    <property type="protein sequence ID" value="CAD45908.1"/>
    <property type="molecule type" value="Genomic_DNA"/>
</dbReference>
<dbReference type="RefSeq" id="WP_000093527.1">
    <property type="nucleotide sequence ID" value="NC_004368.1"/>
</dbReference>
<dbReference type="SMR" id="Q8E794"/>
<dbReference type="KEGG" id="san:glpK"/>
<dbReference type="eggNOG" id="COG0554">
    <property type="taxonomic scope" value="Bacteria"/>
</dbReference>
<dbReference type="HOGENOM" id="CLU_009281_2_3_9"/>
<dbReference type="UniPathway" id="UPA00618">
    <property type="reaction ID" value="UER00672"/>
</dbReference>
<dbReference type="Proteomes" id="UP000000823">
    <property type="component" value="Chromosome"/>
</dbReference>
<dbReference type="GO" id="GO:0005829">
    <property type="term" value="C:cytosol"/>
    <property type="evidence" value="ECO:0007669"/>
    <property type="project" value="TreeGrafter"/>
</dbReference>
<dbReference type="GO" id="GO:0005524">
    <property type="term" value="F:ATP binding"/>
    <property type="evidence" value="ECO:0007669"/>
    <property type="project" value="UniProtKB-UniRule"/>
</dbReference>
<dbReference type="GO" id="GO:0004370">
    <property type="term" value="F:glycerol kinase activity"/>
    <property type="evidence" value="ECO:0000250"/>
    <property type="project" value="UniProtKB"/>
</dbReference>
<dbReference type="GO" id="GO:0019563">
    <property type="term" value="P:glycerol catabolic process"/>
    <property type="evidence" value="ECO:0007669"/>
    <property type="project" value="UniProtKB-UniRule"/>
</dbReference>
<dbReference type="GO" id="GO:0006071">
    <property type="term" value="P:glycerol metabolic process"/>
    <property type="evidence" value="ECO:0000250"/>
    <property type="project" value="UniProtKB"/>
</dbReference>
<dbReference type="GO" id="GO:0006072">
    <property type="term" value="P:glycerol-3-phosphate metabolic process"/>
    <property type="evidence" value="ECO:0007669"/>
    <property type="project" value="InterPro"/>
</dbReference>
<dbReference type="CDD" id="cd07786">
    <property type="entry name" value="FGGY_EcGK_like"/>
    <property type="match status" value="1"/>
</dbReference>
<dbReference type="FunFam" id="3.30.420.40:FF:000007">
    <property type="entry name" value="Glycerol kinase"/>
    <property type="match status" value="1"/>
</dbReference>
<dbReference type="FunFam" id="3.30.420.40:FF:000008">
    <property type="entry name" value="Glycerol kinase"/>
    <property type="match status" value="1"/>
</dbReference>
<dbReference type="Gene3D" id="3.30.420.40">
    <property type="match status" value="2"/>
</dbReference>
<dbReference type="HAMAP" id="MF_00186">
    <property type="entry name" value="Glycerol_kin"/>
    <property type="match status" value="1"/>
</dbReference>
<dbReference type="InterPro" id="IPR043129">
    <property type="entry name" value="ATPase_NBD"/>
</dbReference>
<dbReference type="InterPro" id="IPR000577">
    <property type="entry name" value="Carb_kinase_FGGY"/>
</dbReference>
<dbReference type="InterPro" id="IPR018483">
    <property type="entry name" value="Carb_kinase_FGGY_CS"/>
</dbReference>
<dbReference type="InterPro" id="IPR018485">
    <property type="entry name" value="FGGY_C"/>
</dbReference>
<dbReference type="InterPro" id="IPR018484">
    <property type="entry name" value="FGGY_N"/>
</dbReference>
<dbReference type="InterPro" id="IPR005999">
    <property type="entry name" value="Glycerol_kin"/>
</dbReference>
<dbReference type="NCBIfam" id="TIGR01311">
    <property type="entry name" value="glycerol_kin"/>
    <property type="match status" value="1"/>
</dbReference>
<dbReference type="NCBIfam" id="NF000756">
    <property type="entry name" value="PRK00047.1"/>
    <property type="match status" value="1"/>
</dbReference>
<dbReference type="PANTHER" id="PTHR10196:SF69">
    <property type="entry name" value="GLYCEROL KINASE"/>
    <property type="match status" value="1"/>
</dbReference>
<dbReference type="PANTHER" id="PTHR10196">
    <property type="entry name" value="SUGAR KINASE"/>
    <property type="match status" value="1"/>
</dbReference>
<dbReference type="Pfam" id="PF02782">
    <property type="entry name" value="FGGY_C"/>
    <property type="match status" value="1"/>
</dbReference>
<dbReference type="Pfam" id="PF00370">
    <property type="entry name" value="FGGY_N"/>
    <property type="match status" value="1"/>
</dbReference>
<dbReference type="PIRSF" id="PIRSF000538">
    <property type="entry name" value="GlpK"/>
    <property type="match status" value="1"/>
</dbReference>
<dbReference type="SUPFAM" id="SSF53067">
    <property type="entry name" value="Actin-like ATPase domain"/>
    <property type="match status" value="2"/>
</dbReference>
<dbReference type="PROSITE" id="PS00933">
    <property type="entry name" value="FGGY_KINASES_1"/>
    <property type="match status" value="1"/>
</dbReference>
<dbReference type="PROSITE" id="PS00445">
    <property type="entry name" value="FGGY_KINASES_2"/>
    <property type="match status" value="1"/>
</dbReference>
<keyword id="KW-0067">ATP-binding</keyword>
<keyword id="KW-0319">Glycerol metabolism</keyword>
<keyword id="KW-0418">Kinase</keyword>
<keyword id="KW-0547">Nucleotide-binding</keyword>
<keyword id="KW-0597">Phosphoprotein</keyword>
<keyword id="KW-0808">Transferase</keyword>
<organism>
    <name type="scientific">Streptococcus agalactiae serotype III (strain NEM316)</name>
    <dbReference type="NCBI Taxonomy" id="211110"/>
    <lineage>
        <taxon>Bacteria</taxon>
        <taxon>Bacillati</taxon>
        <taxon>Bacillota</taxon>
        <taxon>Bacilli</taxon>
        <taxon>Lactobacillales</taxon>
        <taxon>Streptococcaceae</taxon>
        <taxon>Streptococcus</taxon>
    </lineage>
</organism>
<evidence type="ECO:0000255" key="1">
    <source>
        <dbReference type="HAMAP-Rule" id="MF_00186"/>
    </source>
</evidence>
<name>GLPK_STRA3</name>
<accession>Q8E794</accession>
<feature type="chain" id="PRO_0000059497" description="Glycerol kinase">
    <location>
        <begin position="1"/>
        <end position="502"/>
    </location>
</feature>
<feature type="binding site" evidence="1">
    <location>
        <position position="15"/>
    </location>
    <ligand>
        <name>ADP</name>
        <dbReference type="ChEBI" id="CHEBI:456216"/>
    </ligand>
</feature>
<feature type="binding site" evidence="1">
    <location>
        <position position="15"/>
    </location>
    <ligand>
        <name>ATP</name>
        <dbReference type="ChEBI" id="CHEBI:30616"/>
    </ligand>
</feature>
<feature type="binding site" evidence="1">
    <location>
        <position position="15"/>
    </location>
    <ligand>
        <name>sn-glycerol 3-phosphate</name>
        <dbReference type="ChEBI" id="CHEBI:57597"/>
    </ligand>
</feature>
<feature type="binding site" evidence="1">
    <location>
        <position position="16"/>
    </location>
    <ligand>
        <name>ATP</name>
        <dbReference type="ChEBI" id="CHEBI:30616"/>
    </ligand>
</feature>
<feature type="binding site" evidence="1">
    <location>
        <position position="17"/>
    </location>
    <ligand>
        <name>ATP</name>
        <dbReference type="ChEBI" id="CHEBI:30616"/>
    </ligand>
</feature>
<feature type="binding site" evidence="1">
    <location>
        <position position="19"/>
    </location>
    <ligand>
        <name>ADP</name>
        <dbReference type="ChEBI" id="CHEBI:456216"/>
    </ligand>
</feature>
<feature type="binding site" evidence="1">
    <location>
        <position position="85"/>
    </location>
    <ligand>
        <name>glycerol</name>
        <dbReference type="ChEBI" id="CHEBI:17754"/>
    </ligand>
</feature>
<feature type="binding site" evidence="1">
    <location>
        <position position="85"/>
    </location>
    <ligand>
        <name>sn-glycerol 3-phosphate</name>
        <dbReference type="ChEBI" id="CHEBI:57597"/>
    </ligand>
</feature>
<feature type="binding site" evidence="1">
    <location>
        <position position="86"/>
    </location>
    <ligand>
        <name>glycerol</name>
        <dbReference type="ChEBI" id="CHEBI:17754"/>
    </ligand>
</feature>
<feature type="binding site" evidence="1">
    <location>
        <position position="86"/>
    </location>
    <ligand>
        <name>sn-glycerol 3-phosphate</name>
        <dbReference type="ChEBI" id="CHEBI:57597"/>
    </ligand>
</feature>
<feature type="binding site" evidence="1">
    <location>
        <position position="137"/>
    </location>
    <ligand>
        <name>glycerol</name>
        <dbReference type="ChEBI" id="CHEBI:17754"/>
    </ligand>
</feature>
<feature type="binding site" evidence="1">
    <location>
        <position position="137"/>
    </location>
    <ligand>
        <name>sn-glycerol 3-phosphate</name>
        <dbReference type="ChEBI" id="CHEBI:57597"/>
    </ligand>
</feature>
<feature type="binding site" evidence="1">
    <location>
        <position position="247"/>
    </location>
    <ligand>
        <name>glycerol</name>
        <dbReference type="ChEBI" id="CHEBI:17754"/>
    </ligand>
</feature>
<feature type="binding site" evidence="1">
    <location>
        <position position="247"/>
    </location>
    <ligand>
        <name>sn-glycerol 3-phosphate</name>
        <dbReference type="ChEBI" id="CHEBI:57597"/>
    </ligand>
</feature>
<feature type="binding site" evidence="1">
    <location>
        <position position="248"/>
    </location>
    <ligand>
        <name>glycerol</name>
        <dbReference type="ChEBI" id="CHEBI:17754"/>
    </ligand>
</feature>
<feature type="binding site" evidence="1">
    <location>
        <position position="269"/>
    </location>
    <ligand>
        <name>ADP</name>
        <dbReference type="ChEBI" id="CHEBI:456216"/>
    </ligand>
</feature>
<feature type="binding site" evidence="1">
    <location>
        <position position="269"/>
    </location>
    <ligand>
        <name>ATP</name>
        <dbReference type="ChEBI" id="CHEBI:30616"/>
    </ligand>
</feature>
<feature type="binding site" evidence="1">
    <location>
        <position position="312"/>
    </location>
    <ligand>
        <name>ADP</name>
        <dbReference type="ChEBI" id="CHEBI:456216"/>
    </ligand>
</feature>
<feature type="binding site" evidence="1">
    <location>
        <position position="312"/>
    </location>
    <ligand>
        <name>ATP</name>
        <dbReference type="ChEBI" id="CHEBI:30616"/>
    </ligand>
</feature>
<feature type="binding site" evidence="1">
    <location>
        <position position="316"/>
    </location>
    <ligand>
        <name>ATP</name>
        <dbReference type="ChEBI" id="CHEBI:30616"/>
    </ligand>
</feature>
<feature type="binding site" evidence="1">
    <location>
        <position position="413"/>
    </location>
    <ligand>
        <name>ADP</name>
        <dbReference type="ChEBI" id="CHEBI:456216"/>
    </ligand>
</feature>
<feature type="binding site" evidence="1">
    <location>
        <position position="413"/>
    </location>
    <ligand>
        <name>ATP</name>
        <dbReference type="ChEBI" id="CHEBI:30616"/>
    </ligand>
</feature>
<feature type="binding site" evidence="1">
    <location>
        <position position="417"/>
    </location>
    <ligand>
        <name>ADP</name>
        <dbReference type="ChEBI" id="CHEBI:456216"/>
    </ligand>
</feature>
<feature type="modified residue" description="Phosphohistidine; by HPr" evidence="1">
    <location>
        <position position="233"/>
    </location>
</feature>